<gene>
    <name type="primary">rpl15e</name>
    <name type="ordered locus">PYRAB08580</name>
    <name type="ORF">PAB0575</name>
</gene>
<organism>
    <name type="scientific">Pyrococcus abyssi (strain GE5 / Orsay)</name>
    <dbReference type="NCBI Taxonomy" id="272844"/>
    <lineage>
        <taxon>Archaea</taxon>
        <taxon>Methanobacteriati</taxon>
        <taxon>Methanobacteriota</taxon>
        <taxon>Thermococci</taxon>
        <taxon>Thermococcales</taxon>
        <taxon>Thermococcaceae</taxon>
        <taxon>Pyrococcus</taxon>
    </lineage>
</organism>
<proteinExistence type="inferred from homology"/>
<protein>
    <recommendedName>
        <fullName evidence="2">Large ribosomal subunit protein eL15</fullName>
    </recommendedName>
    <alternativeName>
        <fullName>50S ribosomal protein L15e</fullName>
    </alternativeName>
</protein>
<dbReference type="EMBL" id="AJ248285">
    <property type="protein sequence ID" value="CAB49772.1"/>
    <property type="molecule type" value="Genomic_DNA"/>
</dbReference>
<dbReference type="EMBL" id="HE613800">
    <property type="protein sequence ID" value="CCE70263.1"/>
    <property type="molecule type" value="Genomic_DNA"/>
</dbReference>
<dbReference type="PIR" id="C75132">
    <property type="entry name" value="C75132"/>
</dbReference>
<dbReference type="RefSeq" id="WP_010867981.1">
    <property type="nucleotide sequence ID" value="NC_000868.1"/>
</dbReference>
<dbReference type="SMR" id="Q9V0D2"/>
<dbReference type="STRING" id="272844.PAB0575"/>
<dbReference type="KEGG" id="pab:PAB0575"/>
<dbReference type="PATRIC" id="fig|272844.11.peg.906"/>
<dbReference type="eggNOG" id="arCOG04209">
    <property type="taxonomic scope" value="Archaea"/>
</dbReference>
<dbReference type="HOGENOM" id="CLU_080796_1_0_2"/>
<dbReference type="OrthoDB" id="8183at2157"/>
<dbReference type="PhylomeDB" id="Q9V0D2"/>
<dbReference type="Proteomes" id="UP000000810">
    <property type="component" value="Chromosome"/>
</dbReference>
<dbReference type="Proteomes" id="UP000009139">
    <property type="component" value="Chromosome"/>
</dbReference>
<dbReference type="GO" id="GO:0022625">
    <property type="term" value="C:cytosolic large ribosomal subunit"/>
    <property type="evidence" value="ECO:0007669"/>
    <property type="project" value="TreeGrafter"/>
</dbReference>
<dbReference type="GO" id="GO:0003723">
    <property type="term" value="F:RNA binding"/>
    <property type="evidence" value="ECO:0007669"/>
    <property type="project" value="TreeGrafter"/>
</dbReference>
<dbReference type="GO" id="GO:0003735">
    <property type="term" value="F:structural constituent of ribosome"/>
    <property type="evidence" value="ECO:0007669"/>
    <property type="project" value="InterPro"/>
</dbReference>
<dbReference type="GO" id="GO:0002181">
    <property type="term" value="P:cytoplasmic translation"/>
    <property type="evidence" value="ECO:0007669"/>
    <property type="project" value="TreeGrafter"/>
</dbReference>
<dbReference type="FunFam" id="3.40.1120.10:FF:000002">
    <property type="entry name" value="50S ribosomal protein L15e"/>
    <property type="match status" value="1"/>
</dbReference>
<dbReference type="Gene3D" id="3.40.1120.10">
    <property type="entry name" value="Ribosomal protein l15e"/>
    <property type="match status" value="1"/>
</dbReference>
<dbReference type="HAMAP" id="MF_00256">
    <property type="entry name" value="Ribosomal_eL15"/>
    <property type="match status" value="1"/>
</dbReference>
<dbReference type="InterPro" id="IPR024794">
    <property type="entry name" value="Rbsml_eL15_core_dom_sf"/>
</dbReference>
<dbReference type="InterPro" id="IPR000439">
    <property type="entry name" value="Ribosomal_eL15"/>
</dbReference>
<dbReference type="InterPro" id="IPR020926">
    <property type="entry name" value="Ribosomal_eL15_arc"/>
</dbReference>
<dbReference type="InterPro" id="IPR020925">
    <property type="entry name" value="Ribosomal_eL15_CS"/>
</dbReference>
<dbReference type="InterPro" id="IPR012678">
    <property type="entry name" value="Ribosomal_uL23/eL15/eS24_sf"/>
</dbReference>
<dbReference type="NCBIfam" id="NF003269">
    <property type="entry name" value="PRK04243.1"/>
    <property type="match status" value="1"/>
</dbReference>
<dbReference type="PANTHER" id="PTHR11847:SF4">
    <property type="entry name" value="LARGE RIBOSOMAL SUBUNIT PROTEIN EL15"/>
    <property type="match status" value="1"/>
</dbReference>
<dbReference type="PANTHER" id="PTHR11847">
    <property type="entry name" value="RIBOSOMAL PROTEIN L15"/>
    <property type="match status" value="1"/>
</dbReference>
<dbReference type="Pfam" id="PF00827">
    <property type="entry name" value="Ribosomal_L15e"/>
    <property type="match status" value="1"/>
</dbReference>
<dbReference type="SMART" id="SM01384">
    <property type="entry name" value="Ribosomal_L15e"/>
    <property type="match status" value="1"/>
</dbReference>
<dbReference type="SUPFAM" id="SSF54189">
    <property type="entry name" value="Ribosomal proteins S24e, L23 and L15e"/>
    <property type="match status" value="1"/>
</dbReference>
<dbReference type="PROSITE" id="PS01194">
    <property type="entry name" value="RIBOSOMAL_L15E"/>
    <property type="match status" value="1"/>
</dbReference>
<accession>Q9V0D2</accession>
<accession>G8ZH68</accession>
<name>RL15E_PYRAB</name>
<keyword id="KW-0687">Ribonucleoprotein</keyword>
<keyword id="KW-0689">Ribosomal protein</keyword>
<comment type="similarity">
    <text evidence="2">Belongs to the eukaryotic ribosomal protein eL15 family.</text>
</comment>
<reference key="1">
    <citation type="journal article" date="2003" name="Mol. Microbiol.">
        <title>An integrated analysis of the genome of the hyperthermophilic archaeon Pyrococcus abyssi.</title>
        <authorList>
            <person name="Cohen G.N."/>
            <person name="Barbe V."/>
            <person name="Flament D."/>
            <person name="Galperin M."/>
            <person name="Heilig R."/>
            <person name="Lecompte O."/>
            <person name="Poch O."/>
            <person name="Prieur D."/>
            <person name="Querellou J."/>
            <person name="Ripp R."/>
            <person name="Thierry J.-C."/>
            <person name="Van der Oost J."/>
            <person name="Weissenbach J."/>
            <person name="Zivanovic Y."/>
            <person name="Forterre P."/>
        </authorList>
    </citation>
    <scope>NUCLEOTIDE SEQUENCE [LARGE SCALE GENOMIC DNA]</scope>
    <source>
        <strain>GE5 / Orsay</strain>
    </source>
</reference>
<reference key="2">
    <citation type="journal article" date="2012" name="Curr. Microbiol.">
        <title>Re-annotation of two hyperthermophilic archaea Pyrococcus abyssi GE5 and Pyrococcus furiosus DSM 3638.</title>
        <authorList>
            <person name="Gao J."/>
            <person name="Wang J."/>
        </authorList>
    </citation>
    <scope>GENOME REANNOTATION</scope>
    <source>
        <strain>GE5 / Orsay</strain>
    </source>
</reference>
<sequence>MGMYKYIREAWKSPKKSYVGQLLKQRMIKWRREPAVVRIERPTRLDRARALGYQAKQGYVIVRVRVRRGGRKRPRWKGGRKPSKMGQVKYSPKKSLQWIAEEKAARKFPNLEVLNSYWVGEDGMYKWFEVIMVDPHHPVIKSDPKIAWIALKHHKGRVFRGLTSAGKKGRGLRNKGKGAEKIRPSIRANEGKGK</sequence>
<feature type="chain" id="PRO_0000127580" description="Large ribosomal subunit protein eL15">
    <location>
        <begin position="1"/>
        <end position="194"/>
    </location>
</feature>
<feature type="region of interest" description="Disordered" evidence="1">
    <location>
        <begin position="164"/>
        <end position="194"/>
    </location>
</feature>
<feature type="compositionally biased region" description="Basic residues" evidence="1">
    <location>
        <begin position="167"/>
        <end position="176"/>
    </location>
</feature>
<feature type="compositionally biased region" description="Basic and acidic residues" evidence="1">
    <location>
        <begin position="177"/>
        <end position="194"/>
    </location>
</feature>
<evidence type="ECO:0000256" key="1">
    <source>
        <dbReference type="SAM" id="MobiDB-lite"/>
    </source>
</evidence>
<evidence type="ECO:0000305" key="2"/>